<proteinExistence type="inferred from homology"/>
<accession>A9MWC2</accession>
<name>QUEC_SALPB</name>
<evidence type="ECO:0000255" key="1">
    <source>
        <dbReference type="HAMAP-Rule" id="MF_01633"/>
    </source>
</evidence>
<reference key="1">
    <citation type="submission" date="2007-11" db="EMBL/GenBank/DDBJ databases">
        <authorList>
            <consortium name="The Salmonella enterica serovar Paratyphi B Genome Sequencing Project"/>
            <person name="McClelland M."/>
            <person name="Sanderson E.K."/>
            <person name="Porwollik S."/>
            <person name="Spieth J."/>
            <person name="Clifton W.S."/>
            <person name="Fulton R."/>
            <person name="Cordes M."/>
            <person name="Wollam A."/>
            <person name="Shah N."/>
            <person name="Pepin K."/>
            <person name="Bhonagiri V."/>
            <person name="Nash W."/>
            <person name="Johnson M."/>
            <person name="Thiruvilangam P."/>
            <person name="Wilson R."/>
        </authorList>
    </citation>
    <scope>NUCLEOTIDE SEQUENCE [LARGE SCALE GENOMIC DNA]</scope>
    <source>
        <strain>ATCC BAA-1250 / SPB7</strain>
    </source>
</reference>
<feature type="chain" id="PRO_1000088162" description="7-cyano-7-deazaguanine synthase">
    <location>
        <begin position="1"/>
        <end position="231"/>
    </location>
</feature>
<feature type="binding site" evidence="1">
    <location>
        <begin position="8"/>
        <end position="18"/>
    </location>
    <ligand>
        <name>ATP</name>
        <dbReference type="ChEBI" id="CHEBI:30616"/>
    </ligand>
</feature>
<feature type="binding site" evidence="1">
    <location>
        <position position="188"/>
    </location>
    <ligand>
        <name>Zn(2+)</name>
        <dbReference type="ChEBI" id="CHEBI:29105"/>
    </ligand>
</feature>
<feature type="binding site" evidence="1">
    <location>
        <position position="197"/>
    </location>
    <ligand>
        <name>Zn(2+)</name>
        <dbReference type="ChEBI" id="CHEBI:29105"/>
    </ligand>
</feature>
<feature type="binding site" evidence="1">
    <location>
        <position position="200"/>
    </location>
    <ligand>
        <name>Zn(2+)</name>
        <dbReference type="ChEBI" id="CHEBI:29105"/>
    </ligand>
</feature>
<feature type="binding site" evidence="1">
    <location>
        <position position="203"/>
    </location>
    <ligand>
        <name>Zn(2+)</name>
        <dbReference type="ChEBI" id="CHEBI:29105"/>
    </ligand>
</feature>
<sequence length="231" mass="25529">MKRAVVVFSGGQDSTTCLAQARHQYDEVHCVTFDYGQRHRAEIDVARDLALKLGARAHKVLDVTLLNELAVSSLTRDSIPVPDYEPNADGIPNTFVPGRNILFLTLAAIYAYQVKAEAVITGVCETDFSGYPDCRDEFVKALNHAVNLGMAKDIRFETPLMWIDKAETWALADYWGQLDLVREETLTCYNGIKGDGCGHCAACNLRANGLNHYLSNKAAVMTAMKQKTGLR</sequence>
<keyword id="KW-0067">ATP-binding</keyword>
<keyword id="KW-0436">Ligase</keyword>
<keyword id="KW-0479">Metal-binding</keyword>
<keyword id="KW-0547">Nucleotide-binding</keyword>
<keyword id="KW-0671">Queuosine biosynthesis</keyword>
<keyword id="KW-0862">Zinc</keyword>
<organism>
    <name type="scientific">Salmonella paratyphi B (strain ATCC BAA-1250 / SPB7)</name>
    <dbReference type="NCBI Taxonomy" id="1016998"/>
    <lineage>
        <taxon>Bacteria</taxon>
        <taxon>Pseudomonadati</taxon>
        <taxon>Pseudomonadota</taxon>
        <taxon>Gammaproteobacteria</taxon>
        <taxon>Enterobacterales</taxon>
        <taxon>Enterobacteriaceae</taxon>
        <taxon>Salmonella</taxon>
    </lineage>
</organism>
<protein>
    <recommendedName>
        <fullName evidence="1">7-cyano-7-deazaguanine synthase</fullName>
        <ecNumber evidence="1">6.3.4.20</ecNumber>
    </recommendedName>
    <alternativeName>
        <fullName evidence="1">7-cyano-7-carbaguanine synthase</fullName>
    </alternativeName>
    <alternativeName>
        <fullName evidence="1">PreQ(0) synthase</fullName>
    </alternativeName>
    <alternativeName>
        <fullName evidence="1">Queuosine biosynthesis protein QueC</fullName>
    </alternativeName>
</protein>
<gene>
    <name evidence="1" type="primary">queC</name>
    <name type="ordered locus">SPAB_03120</name>
</gene>
<comment type="function">
    <text evidence="1">Catalyzes the ATP-dependent conversion of 7-carboxy-7-deazaguanine (CDG) to 7-cyano-7-deazaguanine (preQ(0)).</text>
</comment>
<comment type="catalytic activity">
    <reaction evidence="1">
        <text>7-carboxy-7-deazaguanine + NH4(+) + ATP = 7-cyano-7-deazaguanine + ADP + phosphate + H2O + H(+)</text>
        <dbReference type="Rhea" id="RHEA:27982"/>
        <dbReference type="ChEBI" id="CHEBI:15377"/>
        <dbReference type="ChEBI" id="CHEBI:15378"/>
        <dbReference type="ChEBI" id="CHEBI:28938"/>
        <dbReference type="ChEBI" id="CHEBI:30616"/>
        <dbReference type="ChEBI" id="CHEBI:43474"/>
        <dbReference type="ChEBI" id="CHEBI:45075"/>
        <dbReference type="ChEBI" id="CHEBI:61036"/>
        <dbReference type="ChEBI" id="CHEBI:456216"/>
        <dbReference type="EC" id="6.3.4.20"/>
    </reaction>
</comment>
<comment type="cofactor">
    <cofactor evidence="1">
        <name>Zn(2+)</name>
        <dbReference type="ChEBI" id="CHEBI:29105"/>
    </cofactor>
    <text evidence="1">Binds 1 zinc ion per subunit.</text>
</comment>
<comment type="pathway">
    <text evidence="1">Purine metabolism; 7-cyano-7-deazaguanine biosynthesis.</text>
</comment>
<comment type="similarity">
    <text evidence="1">Belongs to the QueC family.</text>
</comment>
<dbReference type="EC" id="6.3.4.20" evidence="1"/>
<dbReference type="EMBL" id="CP000886">
    <property type="protein sequence ID" value="ABX68481.1"/>
    <property type="molecule type" value="Genomic_DNA"/>
</dbReference>
<dbReference type="RefSeq" id="WP_000817211.1">
    <property type="nucleotide sequence ID" value="NC_010102.1"/>
</dbReference>
<dbReference type="SMR" id="A9MWC2"/>
<dbReference type="KEGG" id="spq:SPAB_03120"/>
<dbReference type="PATRIC" id="fig|1016998.12.peg.2944"/>
<dbReference type="HOGENOM" id="CLU_081854_0_0_6"/>
<dbReference type="BioCyc" id="SENT1016998:SPAB_RS12740-MONOMER"/>
<dbReference type="UniPathway" id="UPA00391"/>
<dbReference type="Proteomes" id="UP000008556">
    <property type="component" value="Chromosome"/>
</dbReference>
<dbReference type="GO" id="GO:0005524">
    <property type="term" value="F:ATP binding"/>
    <property type="evidence" value="ECO:0007669"/>
    <property type="project" value="UniProtKB-UniRule"/>
</dbReference>
<dbReference type="GO" id="GO:0016879">
    <property type="term" value="F:ligase activity, forming carbon-nitrogen bonds"/>
    <property type="evidence" value="ECO:0007669"/>
    <property type="project" value="UniProtKB-UniRule"/>
</dbReference>
<dbReference type="GO" id="GO:0008270">
    <property type="term" value="F:zinc ion binding"/>
    <property type="evidence" value="ECO:0007669"/>
    <property type="project" value="UniProtKB-UniRule"/>
</dbReference>
<dbReference type="GO" id="GO:0008616">
    <property type="term" value="P:queuosine biosynthetic process"/>
    <property type="evidence" value="ECO:0007669"/>
    <property type="project" value="UniProtKB-UniRule"/>
</dbReference>
<dbReference type="CDD" id="cd01995">
    <property type="entry name" value="QueC-like"/>
    <property type="match status" value="1"/>
</dbReference>
<dbReference type="FunFam" id="3.40.50.620:FF:000017">
    <property type="entry name" value="7-cyano-7-deazaguanine synthase"/>
    <property type="match status" value="1"/>
</dbReference>
<dbReference type="Gene3D" id="3.40.50.620">
    <property type="entry name" value="HUPs"/>
    <property type="match status" value="1"/>
</dbReference>
<dbReference type="HAMAP" id="MF_01633">
    <property type="entry name" value="QueC"/>
    <property type="match status" value="1"/>
</dbReference>
<dbReference type="InterPro" id="IPR018317">
    <property type="entry name" value="QueC"/>
</dbReference>
<dbReference type="InterPro" id="IPR014729">
    <property type="entry name" value="Rossmann-like_a/b/a_fold"/>
</dbReference>
<dbReference type="NCBIfam" id="TIGR00364">
    <property type="entry name" value="7-cyano-7-deazaguanine synthase QueC"/>
    <property type="match status" value="1"/>
</dbReference>
<dbReference type="NCBIfam" id="NF008317">
    <property type="entry name" value="PRK11106.1"/>
    <property type="match status" value="1"/>
</dbReference>
<dbReference type="PANTHER" id="PTHR42914">
    <property type="entry name" value="7-CYANO-7-DEAZAGUANINE SYNTHASE"/>
    <property type="match status" value="1"/>
</dbReference>
<dbReference type="PANTHER" id="PTHR42914:SF1">
    <property type="entry name" value="7-CYANO-7-DEAZAGUANINE SYNTHASE"/>
    <property type="match status" value="1"/>
</dbReference>
<dbReference type="Pfam" id="PF06508">
    <property type="entry name" value="QueC"/>
    <property type="match status" value="1"/>
</dbReference>
<dbReference type="PIRSF" id="PIRSF006293">
    <property type="entry name" value="ExsB"/>
    <property type="match status" value="1"/>
</dbReference>
<dbReference type="SUPFAM" id="SSF52402">
    <property type="entry name" value="Adenine nucleotide alpha hydrolases-like"/>
    <property type="match status" value="1"/>
</dbReference>